<proteinExistence type="predicted"/>
<evidence type="ECO:0000256" key="1">
    <source>
        <dbReference type="SAM" id="MobiDB-lite"/>
    </source>
</evidence>
<evidence type="ECO:0000305" key="2"/>
<reference key="1">
    <citation type="journal article" date="2000" name="Nature">
        <title>Sequence and analysis of chromosome 1 of the plant Arabidopsis thaliana.</title>
        <authorList>
            <person name="Theologis A."/>
            <person name="Ecker J.R."/>
            <person name="Palm C.J."/>
            <person name="Federspiel N.A."/>
            <person name="Kaul S."/>
            <person name="White O."/>
            <person name="Alonso J."/>
            <person name="Altafi H."/>
            <person name="Araujo R."/>
            <person name="Bowman C.L."/>
            <person name="Brooks S.Y."/>
            <person name="Buehler E."/>
            <person name="Chan A."/>
            <person name="Chao Q."/>
            <person name="Chen H."/>
            <person name="Cheuk R.F."/>
            <person name="Chin C.W."/>
            <person name="Chung M.K."/>
            <person name="Conn L."/>
            <person name="Conway A.B."/>
            <person name="Conway A.R."/>
            <person name="Creasy T.H."/>
            <person name="Dewar K."/>
            <person name="Dunn P."/>
            <person name="Etgu P."/>
            <person name="Feldblyum T.V."/>
            <person name="Feng J.-D."/>
            <person name="Fong B."/>
            <person name="Fujii C.Y."/>
            <person name="Gill J.E."/>
            <person name="Goldsmith A.D."/>
            <person name="Haas B."/>
            <person name="Hansen N.F."/>
            <person name="Hughes B."/>
            <person name="Huizar L."/>
            <person name="Hunter J.L."/>
            <person name="Jenkins J."/>
            <person name="Johnson-Hopson C."/>
            <person name="Khan S."/>
            <person name="Khaykin E."/>
            <person name="Kim C.J."/>
            <person name="Koo H.L."/>
            <person name="Kremenetskaia I."/>
            <person name="Kurtz D.B."/>
            <person name="Kwan A."/>
            <person name="Lam B."/>
            <person name="Langin-Hooper S."/>
            <person name="Lee A."/>
            <person name="Lee J.M."/>
            <person name="Lenz C.A."/>
            <person name="Li J.H."/>
            <person name="Li Y.-P."/>
            <person name="Lin X."/>
            <person name="Liu S.X."/>
            <person name="Liu Z.A."/>
            <person name="Luros J.S."/>
            <person name="Maiti R."/>
            <person name="Marziali A."/>
            <person name="Militscher J."/>
            <person name="Miranda M."/>
            <person name="Nguyen M."/>
            <person name="Nierman W.C."/>
            <person name="Osborne B.I."/>
            <person name="Pai G."/>
            <person name="Peterson J."/>
            <person name="Pham P.K."/>
            <person name="Rizzo M."/>
            <person name="Rooney T."/>
            <person name="Rowley D."/>
            <person name="Sakano H."/>
            <person name="Salzberg S.L."/>
            <person name="Schwartz J.R."/>
            <person name="Shinn P."/>
            <person name="Southwick A.M."/>
            <person name="Sun H."/>
            <person name="Tallon L.J."/>
            <person name="Tambunga G."/>
            <person name="Toriumi M.J."/>
            <person name="Town C.D."/>
            <person name="Utterback T."/>
            <person name="Van Aken S."/>
            <person name="Vaysberg M."/>
            <person name="Vysotskaia V.S."/>
            <person name="Walker M."/>
            <person name="Wu D."/>
            <person name="Yu G."/>
            <person name="Fraser C.M."/>
            <person name="Venter J.C."/>
            <person name="Davis R.W."/>
        </authorList>
    </citation>
    <scope>NUCLEOTIDE SEQUENCE [LARGE SCALE GENOMIC DNA]</scope>
    <source>
        <strain>cv. Columbia</strain>
    </source>
</reference>
<reference key="2">
    <citation type="journal article" date="2017" name="Plant J.">
        <title>Araport11: a complete reannotation of the Arabidopsis thaliana reference genome.</title>
        <authorList>
            <person name="Cheng C.Y."/>
            <person name="Krishnakumar V."/>
            <person name="Chan A.P."/>
            <person name="Thibaud-Nissen F."/>
            <person name="Schobel S."/>
            <person name="Town C.D."/>
        </authorList>
    </citation>
    <scope>GENOME REANNOTATION</scope>
    <source>
        <strain>cv. Columbia</strain>
    </source>
</reference>
<comment type="sequence caution" evidence="2">
    <conflict type="erroneous initiation">
        <sequence resource="EMBL-CDS" id="AAF27071"/>
    </conflict>
    <text>Extended N-terminus.</text>
</comment>
<feature type="chain" id="PRO_0000283353" description="F-box protein At1g69090">
    <location>
        <begin position="1"/>
        <end position="401"/>
    </location>
</feature>
<feature type="domain" description="F-box">
    <location>
        <begin position="27"/>
        <end position="74"/>
    </location>
</feature>
<feature type="region of interest" description="Disordered" evidence="1">
    <location>
        <begin position="1"/>
        <end position="23"/>
    </location>
</feature>
<dbReference type="EMBL" id="AC008262">
    <property type="protein sequence ID" value="AAF27071.1"/>
    <property type="status" value="ALT_INIT"/>
    <property type="molecule type" value="Genomic_DNA"/>
</dbReference>
<dbReference type="EMBL" id="CP002684">
    <property type="protein sequence ID" value="AEE34885.1"/>
    <property type="molecule type" value="Genomic_DNA"/>
</dbReference>
<dbReference type="RefSeq" id="NP_177072.1">
    <property type="nucleotide sequence ID" value="NM_105579.2"/>
</dbReference>
<dbReference type="FunCoup" id="Q9LQB0">
    <property type="interactions" value="33"/>
</dbReference>
<dbReference type="PaxDb" id="3702-AT1G69090.1"/>
<dbReference type="EnsemblPlants" id="AT1G69090.1">
    <property type="protein sequence ID" value="AT1G69090.1"/>
    <property type="gene ID" value="AT1G69090"/>
</dbReference>
<dbReference type="GeneID" id="843241"/>
<dbReference type="Gramene" id="AT1G69090.1">
    <property type="protein sequence ID" value="AT1G69090.1"/>
    <property type="gene ID" value="AT1G69090"/>
</dbReference>
<dbReference type="KEGG" id="ath:AT1G69090"/>
<dbReference type="Araport" id="AT1G69090"/>
<dbReference type="TAIR" id="AT1G69090">
    <property type="gene designation" value="ATFDB6"/>
</dbReference>
<dbReference type="HOGENOM" id="CLU_019286_7_1_1"/>
<dbReference type="InParanoid" id="Q9LQB0"/>
<dbReference type="OMA" id="TQHLGDD"/>
<dbReference type="PRO" id="PR:Q9LQB0"/>
<dbReference type="Proteomes" id="UP000006548">
    <property type="component" value="Chromosome 1"/>
</dbReference>
<dbReference type="ExpressionAtlas" id="Q9LQB0">
    <property type="expression patterns" value="baseline"/>
</dbReference>
<dbReference type="Gene3D" id="1.20.1280.50">
    <property type="match status" value="1"/>
</dbReference>
<dbReference type="InterPro" id="IPR036047">
    <property type="entry name" value="F-box-like_dom_sf"/>
</dbReference>
<dbReference type="InterPro" id="IPR050942">
    <property type="entry name" value="F-box_BR-signaling"/>
</dbReference>
<dbReference type="InterPro" id="IPR001810">
    <property type="entry name" value="F-box_dom"/>
</dbReference>
<dbReference type="InterPro" id="IPR005174">
    <property type="entry name" value="KIB1-4_b-propeller"/>
</dbReference>
<dbReference type="PANTHER" id="PTHR44259:SF25">
    <property type="entry name" value="F-BOX DOMAIN-CONTAINING PROTEIN"/>
    <property type="match status" value="1"/>
</dbReference>
<dbReference type="PANTHER" id="PTHR44259">
    <property type="entry name" value="OS07G0183000 PROTEIN-RELATED"/>
    <property type="match status" value="1"/>
</dbReference>
<dbReference type="Pfam" id="PF03478">
    <property type="entry name" value="Beta-prop_KIB1-4"/>
    <property type="match status" value="1"/>
</dbReference>
<dbReference type="Pfam" id="PF00646">
    <property type="entry name" value="F-box"/>
    <property type="match status" value="1"/>
</dbReference>
<dbReference type="SUPFAM" id="SSF81383">
    <property type="entry name" value="F-box domain"/>
    <property type="match status" value="1"/>
</dbReference>
<name>FB80_ARATH</name>
<protein>
    <recommendedName>
        <fullName>F-box protein At1g69090</fullName>
    </recommendedName>
</protein>
<gene>
    <name type="ordered locus">At1g69090</name>
    <name type="ORF">F4N2.7</name>
</gene>
<keyword id="KW-1185">Reference proteome</keyword>
<sequence>MASPTLALAQSPPPKSPAVSVSQRNPHCWSKLPLDLMQLVFERLAFLDFERAKSVCSSWQFGSKQSKPNNQIPWMILFPTDKNYCLLFNPEDKEKLYKTQHLGDDFAKSIVLATYRSWLLMQPRYEELEDQTLDQEFHLYIKDLLTCERINLPAFESDIFGLSHPILWIDDKTKDYLVIGTINRETMVSFKNGDNSWKKFPELPKSSCTDMCLNMIYKDHKLHYLDYSNLYIYDFFGEFPREAFRISVREFVGYATNPYGYDEFPEVPLKLKLNRYIYNMIVTVRGDVLIVASLHFSMAETWEFIICKMDSSKVNKWEEIVSLGDESILLGLGITVLAKDMEGITCNSIYFTADDFYEDYEENEIFIYNLDTNKVEIPHQFVSSSIPSAHARWFLPTFKRD</sequence>
<organism>
    <name type="scientific">Arabidopsis thaliana</name>
    <name type="common">Mouse-ear cress</name>
    <dbReference type="NCBI Taxonomy" id="3702"/>
    <lineage>
        <taxon>Eukaryota</taxon>
        <taxon>Viridiplantae</taxon>
        <taxon>Streptophyta</taxon>
        <taxon>Embryophyta</taxon>
        <taxon>Tracheophyta</taxon>
        <taxon>Spermatophyta</taxon>
        <taxon>Magnoliopsida</taxon>
        <taxon>eudicotyledons</taxon>
        <taxon>Gunneridae</taxon>
        <taxon>Pentapetalae</taxon>
        <taxon>rosids</taxon>
        <taxon>malvids</taxon>
        <taxon>Brassicales</taxon>
        <taxon>Brassicaceae</taxon>
        <taxon>Camelineae</taxon>
        <taxon>Arabidopsis</taxon>
    </lineage>
</organism>
<accession>Q9LQB0</accession>